<comment type="subcellular location">
    <subcellularLocation>
        <location evidence="1">Cytoplasm</location>
    </subcellularLocation>
</comment>
<comment type="similarity">
    <text evidence="1">Belongs to the CutC family.</text>
</comment>
<comment type="caution">
    <text evidence="1">Once thought to be involved in copper homeostasis, experiments in E.coli have shown this is not the case.</text>
</comment>
<protein>
    <recommendedName>
        <fullName evidence="1">PF03932 family protein CutC</fullName>
    </recommendedName>
</protein>
<dbReference type="EMBL" id="AM920689">
    <property type="protein sequence ID" value="CAP50590.1"/>
    <property type="molecule type" value="Genomic_DNA"/>
</dbReference>
<dbReference type="SMR" id="B0RQ55"/>
<dbReference type="KEGG" id="xca:xcc-b100_1240"/>
<dbReference type="HOGENOM" id="CLU_050555_3_1_6"/>
<dbReference type="Proteomes" id="UP000001188">
    <property type="component" value="Chromosome"/>
</dbReference>
<dbReference type="GO" id="GO:0005737">
    <property type="term" value="C:cytoplasm"/>
    <property type="evidence" value="ECO:0007669"/>
    <property type="project" value="UniProtKB-SubCell"/>
</dbReference>
<dbReference type="GO" id="GO:0005507">
    <property type="term" value="F:copper ion binding"/>
    <property type="evidence" value="ECO:0007669"/>
    <property type="project" value="TreeGrafter"/>
</dbReference>
<dbReference type="FunFam" id="3.20.20.380:FF:000001">
    <property type="entry name" value="Copper homeostasis protein CutC"/>
    <property type="match status" value="1"/>
</dbReference>
<dbReference type="Gene3D" id="3.20.20.380">
    <property type="entry name" value="Copper homeostasis (CutC) domain"/>
    <property type="match status" value="1"/>
</dbReference>
<dbReference type="HAMAP" id="MF_00795">
    <property type="entry name" value="CutC"/>
    <property type="match status" value="1"/>
</dbReference>
<dbReference type="InterPro" id="IPR005627">
    <property type="entry name" value="CutC-like"/>
</dbReference>
<dbReference type="InterPro" id="IPR036822">
    <property type="entry name" value="CutC-like_dom_sf"/>
</dbReference>
<dbReference type="PANTHER" id="PTHR12598">
    <property type="entry name" value="COPPER HOMEOSTASIS PROTEIN CUTC"/>
    <property type="match status" value="1"/>
</dbReference>
<dbReference type="PANTHER" id="PTHR12598:SF0">
    <property type="entry name" value="COPPER HOMEOSTASIS PROTEIN CUTC HOMOLOG"/>
    <property type="match status" value="1"/>
</dbReference>
<dbReference type="Pfam" id="PF03932">
    <property type="entry name" value="CutC"/>
    <property type="match status" value="1"/>
</dbReference>
<dbReference type="SUPFAM" id="SSF110395">
    <property type="entry name" value="CutC-like"/>
    <property type="match status" value="1"/>
</dbReference>
<reference key="1">
    <citation type="journal article" date="2008" name="J. Biotechnol.">
        <title>The genome of Xanthomonas campestris pv. campestris B100 and its use for the reconstruction of metabolic pathways involved in xanthan biosynthesis.</title>
        <authorList>
            <person name="Vorhoelter F.-J."/>
            <person name="Schneiker S."/>
            <person name="Goesmann A."/>
            <person name="Krause L."/>
            <person name="Bekel T."/>
            <person name="Kaiser O."/>
            <person name="Linke B."/>
            <person name="Patschkowski T."/>
            <person name="Rueckert C."/>
            <person name="Schmid J."/>
            <person name="Sidhu V.K."/>
            <person name="Sieber V."/>
            <person name="Tauch A."/>
            <person name="Watt S.A."/>
            <person name="Weisshaar B."/>
            <person name="Becker A."/>
            <person name="Niehaus K."/>
            <person name="Puehler A."/>
        </authorList>
    </citation>
    <scope>NUCLEOTIDE SEQUENCE [LARGE SCALE GENOMIC DNA]</scope>
    <source>
        <strain>B100</strain>
    </source>
</reference>
<keyword id="KW-0963">Cytoplasm</keyword>
<feature type="chain" id="PRO_1000133852" description="PF03932 family protein CutC">
    <location>
        <begin position="1"/>
        <end position="240"/>
    </location>
</feature>
<sequence length="240" mass="24841">MGLEVAADSVGSALAAQDGGAIRVELCGGLDGGGLTPSFGTLAVVRERLQIPLYVLIRPRVGDFVFDAAEVEVMRRDVEQCVRLGCDGVVLGALDLQGQVDLPAMRALIEAAGTLGVTFHRAIDVSADPARVLEDAIALGCERVLTSGARASALEGVETIAALVRQAGERISIMPGAGVSAANVQALRAGTGAREFHASARGPVAAQVHAPHPYITDLGGDYQRTDVARVRSIVQLLQTA</sequence>
<name>CUTC_XANCB</name>
<organism>
    <name type="scientific">Xanthomonas campestris pv. campestris (strain B100)</name>
    <dbReference type="NCBI Taxonomy" id="509169"/>
    <lineage>
        <taxon>Bacteria</taxon>
        <taxon>Pseudomonadati</taxon>
        <taxon>Pseudomonadota</taxon>
        <taxon>Gammaproteobacteria</taxon>
        <taxon>Lysobacterales</taxon>
        <taxon>Lysobacteraceae</taxon>
        <taxon>Xanthomonas</taxon>
    </lineage>
</organism>
<proteinExistence type="inferred from homology"/>
<evidence type="ECO:0000255" key="1">
    <source>
        <dbReference type="HAMAP-Rule" id="MF_00795"/>
    </source>
</evidence>
<gene>
    <name evidence="1" type="primary">cutC</name>
    <name type="ordered locus">xcc-b100_1240</name>
</gene>
<accession>B0RQ55</accession>